<accession>Q1CE02</accession>
<accession>D1Q1C5</accession>
<gene>
    <name evidence="1" type="primary">murA</name>
    <name type="ordered locus">YPN_3451</name>
    <name type="ORF">YP516_3924</name>
</gene>
<name>MURA_YERPN</name>
<protein>
    <recommendedName>
        <fullName evidence="1">UDP-N-acetylglucosamine 1-carboxyvinyltransferase</fullName>
        <ecNumber evidence="1">2.5.1.7</ecNumber>
    </recommendedName>
    <alternativeName>
        <fullName evidence="1">Enoylpyruvate transferase</fullName>
    </alternativeName>
    <alternativeName>
        <fullName evidence="1">UDP-N-acetylglucosamine enolpyruvyl transferase</fullName>
        <shortName evidence="1">EPT</shortName>
    </alternativeName>
</protein>
<keyword id="KW-0131">Cell cycle</keyword>
<keyword id="KW-0132">Cell division</keyword>
<keyword id="KW-0133">Cell shape</keyword>
<keyword id="KW-0961">Cell wall biogenesis/degradation</keyword>
<keyword id="KW-0963">Cytoplasm</keyword>
<keyword id="KW-0573">Peptidoglycan synthesis</keyword>
<keyword id="KW-0670">Pyruvate</keyword>
<keyword id="KW-0808">Transferase</keyword>
<organism>
    <name type="scientific">Yersinia pestis bv. Antiqua (strain Nepal516)</name>
    <dbReference type="NCBI Taxonomy" id="377628"/>
    <lineage>
        <taxon>Bacteria</taxon>
        <taxon>Pseudomonadati</taxon>
        <taxon>Pseudomonadota</taxon>
        <taxon>Gammaproteobacteria</taxon>
        <taxon>Enterobacterales</taxon>
        <taxon>Yersiniaceae</taxon>
        <taxon>Yersinia</taxon>
    </lineage>
</organism>
<reference key="1">
    <citation type="journal article" date="2006" name="J. Bacteriol.">
        <title>Complete genome sequence of Yersinia pestis strains Antiqua and Nepal516: evidence of gene reduction in an emerging pathogen.</title>
        <authorList>
            <person name="Chain P.S.G."/>
            <person name="Hu P."/>
            <person name="Malfatti S.A."/>
            <person name="Radnedge L."/>
            <person name="Larimer F."/>
            <person name="Vergez L.M."/>
            <person name="Worsham P."/>
            <person name="Chu M.C."/>
            <person name="Andersen G.L."/>
        </authorList>
    </citation>
    <scope>NUCLEOTIDE SEQUENCE [LARGE SCALE GENOMIC DNA]</scope>
    <source>
        <strain>Nepal516</strain>
    </source>
</reference>
<reference key="2">
    <citation type="submission" date="2009-04" db="EMBL/GenBank/DDBJ databases">
        <title>Yersinia pestis Nepal516A whole genome shotgun sequencing project.</title>
        <authorList>
            <person name="Plunkett G. III"/>
            <person name="Anderson B.D."/>
            <person name="Baumler D.J."/>
            <person name="Burland V."/>
            <person name="Cabot E.L."/>
            <person name="Glasner J.D."/>
            <person name="Mau B."/>
            <person name="Neeno-Eckwall E."/>
            <person name="Perna N.T."/>
            <person name="Munk A.C."/>
            <person name="Tapia R."/>
            <person name="Green L.D."/>
            <person name="Rogers Y.C."/>
            <person name="Detter J.C."/>
            <person name="Bruce D.C."/>
            <person name="Brettin T.S."/>
        </authorList>
    </citation>
    <scope>NUCLEOTIDE SEQUENCE [LARGE SCALE GENOMIC DNA]</scope>
    <source>
        <strain>Nepal516</strain>
    </source>
</reference>
<dbReference type="EC" id="2.5.1.7" evidence="1"/>
<dbReference type="EMBL" id="CP000305">
    <property type="protein sequence ID" value="ABG19778.1"/>
    <property type="molecule type" value="Genomic_DNA"/>
</dbReference>
<dbReference type="EMBL" id="ACNQ01000019">
    <property type="protein sequence ID" value="EEO74328.1"/>
    <property type="molecule type" value="Genomic_DNA"/>
</dbReference>
<dbReference type="RefSeq" id="WP_002210127.1">
    <property type="nucleotide sequence ID" value="NZ_ACNQ01000019.1"/>
</dbReference>
<dbReference type="SMR" id="Q1CE02"/>
<dbReference type="GeneID" id="57975146"/>
<dbReference type="KEGG" id="ypn:YPN_3451"/>
<dbReference type="HOGENOM" id="CLU_027387_0_0_6"/>
<dbReference type="UniPathway" id="UPA00219"/>
<dbReference type="Proteomes" id="UP000008936">
    <property type="component" value="Chromosome"/>
</dbReference>
<dbReference type="GO" id="GO:0005737">
    <property type="term" value="C:cytoplasm"/>
    <property type="evidence" value="ECO:0007669"/>
    <property type="project" value="UniProtKB-SubCell"/>
</dbReference>
<dbReference type="GO" id="GO:0008760">
    <property type="term" value="F:UDP-N-acetylglucosamine 1-carboxyvinyltransferase activity"/>
    <property type="evidence" value="ECO:0007669"/>
    <property type="project" value="UniProtKB-UniRule"/>
</dbReference>
<dbReference type="GO" id="GO:0051301">
    <property type="term" value="P:cell division"/>
    <property type="evidence" value="ECO:0007669"/>
    <property type="project" value="UniProtKB-KW"/>
</dbReference>
<dbReference type="GO" id="GO:0071555">
    <property type="term" value="P:cell wall organization"/>
    <property type="evidence" value="ECO:0007669"/>
    <property type="project" value="UniProtKB-KW"/>
</dbReference>
<dbReference type="GO" id="GO:0009252">
    <property type="term" value="P:peptidoglycan biosynthetic process"/>
    <property type="evidence" value="ECO:0007669"/>
    <property type="project" value="UniProtKB-UniRule"/>
</dbReference>
<dbReference type="GO" id="GO:0008360">
    <property type="term" value="P:regulation of cell shape"/>
    <property type="evidence" value="ECO:0007669"/>
    <property type="project" value="UniProtKB-KW"/>
</dbReference>
<dbReference type="GO" id="GO:0019277">
    <property type="term" value="P:UDP-N-acetylgalactosamine biosynthetic process"/>
    <property type="evidence" value="ECO:0007669"/>
    <property type="project" value="InterPro"/>
</dbReference>
<dbReference type="CDD" id="cd01555">
    <property type="entry name" value="UdpNAET"/>
    <property type="match status" value="1"/>
</dbReference>
<dbReference type="FunFam" id="3.65.10.10:FF:000002">
    <property type="entry name" value="UDP-N-acetylglucosamine 1-carboxyvinyltransferase"/>
    <property type="match status" value="1"/>
</dbReference>
<dbReference type="Gene3D" id="3.65.10.10">
    <property type="entry name" value="Enolpyruvate transferase domain"/>
    <property type="match status" value="2"/>
</dbReference>
<dbReference type="HAMAP" id="MF_00111">
    <property type="entry name" value="MurA"/>
    <property type="match status" value="1"/>
</dbReference>
<dbReference type="InterPro" id="IPR001986">
    <property type="entry name" value="Enolpyruvate_Tfrase_dom"/>
</dbReference>
<dbReference type="InterPro" id="IPR036968">
    <property type="entry name" value="Enolpyruvate_Tfrase_sf"/>
</dbReference>
<dbReference type="InterPro" id="IPR050068">
    <property type="entry name" value="MurA_subfamily"/>
</dbReference>
<dbReference type="InterPro" id="IPR013792">
    <property type="entry name" value="RNA3'P_cycl/enolpyr_Trfase_a/b"/>
</dbReference>
<dbReference type="InterPro" id="IPR005750">
    <property type="entry name" value="UDP_GlcNAc_COvinyl_MurA"/>
</dbReference>
<dbReference type="NCBIfam" id="TIGR01072">
    <property type="entry name" value="murA"/>
    <property type="match status" value="1"/>
</dbReference>
<dbReference type="NCBIfam" id="NF006873">
    <property type="entry name" value="PRK09369.1"/>
    <property type="match status" value="1"/>
</dbReference>
<dbReference type="PANTHER" id="PTHR43783">
    <property type="entry name" value="UDP-N-ACETYLGLUCOSAMINE 1-CARBOXYVINYLTRANSFERASE"/>
    <property type="match status" value="1"/>
</dbReference>
<dbReference type="PANTHER" id="PTHR43783:SF1">
    <property type="entry name" value="UDP-N-ACETYLGLUCOSAMINE 1-CARBOXYVINYLTRANSFERASE"/>
    <property type="match status" value="1"/>
</dbReference>
<dbReference type="Pfam" id="PF00275">
    <property type="entry name" value="EPSP_synthase"/>
    <property type="match status" value="1"/>
</dbReference>
<dbReference type="SUPFAM" id="SSF55205">
    <property type="entry name" value="EPT/RTPC-like"/>
    <property type="match status" value="1"/>
</dbReference>
<sequence length="420" mass="44845">MDKFRVQGRTRLSGEVTISGAKNAALPILFAALLAEEPVELQNVPKLKDIDTTIKLLSQLGTKIERNNGSVFVDASAVNEFCAPYDLVKTMRASIWALGPLVARFGQGQVSLPGGCAIGARPVDLHITGLEQLGAEIKLEEGYVKASVNGRLKGAHIVMDKVSVGATVTIMSAATLAEGTTVIENAAREPEIVDTANFLNTLGAKISGAGTDRITIEGVTRLGGGVYRVLPDRIETGTFLVAAAISGGKVVCRQTRPDTLDAVLAKLREAGADIEVGDDWISLDMQGKRPKAITFRTAPHPGFPTDMQAQFSLLNLVAEGTGVITETIFENRFMHVPELIRMGAHAEIESNTVICYGVEQLSGAQVMATDLRASASLVLAGCIAEGVTIVDRIYHIDRGYERIEDKLRALGAKIERVKGE</sequence>
<comment type="function">
    <text evidence="1">Cell wall formation. Adds enolpyruvyl to UDP-N-acetylglucosamine.</text>
</comment>
<comment type="catalytic activity">
    <reaction evidence="1">
        <text>phosphoenolpyruvate + UDP-N-acetyl-alpha-D-glucosamine = UDP-N-acetyl-3-O-(1-carboxyvinyl)-alpha-D-glucosamine + phosphate</text>
        <dbReference type="Rhea" id="RHEA:18681"/>
        <dbReference type="ChEBI" id="CHEBI:43474"/>
        <dbReference type="ChEBI" id="CHEBI:57705"/>
        <dbReference type="ChEBI" id="CHEBI:58702"/>
        <dbReference type="ChEBI" id="CHEBI:68483"/>
        <dbReference type="EC" id="2.5.1.7"/>
    </reaction>
</comment>
<comment type="pathway">
    <text evidence="1">Cell wall biogenesis; peptidoglycan biosynthesis.</text>
</comment>
<comment type="subcellular location">
    <subcellularLocation>
        <location evidence="1">Cytoplasm</location>
    </subcellularLocation>
</comment>
<comment type="similarity">
    <text evidence="1">Belongs to the EPSP synthase family. MurA subfamily.</text>
</comment>
<evidence type="ECO:0000255" key="1">
    <source>
        <dbReference type="HAMAP-Rule" id="MF_00111"/>
    </source>
</evidence>
<proteinExistence type="inferred from homology"/>
<feature type="chain" id="PRO_1000023125" description="UDP-N-acetylglucosamine 1-carboxyvinyltransferase">
    <location>
        <begin position="1"/>
        <end position="420"/>
    </location>
</feature>
<feature type="active site" description="Proton donor" evidence="1">
    <location>
        <position position="116"/>
    </location>
</feature>
<feature type="binding site" evidence="1">
    <location>
        <begin position="22"/>
        <end position="23"/>
    </location>
    <ligand>
        <name>phosphoenolpyruvate</name>
        <dbReference type="ChEBI" id="CHEBI:58702"/>
    </ligand>
</feature>
<feature type="binding site" evidence="1">
    <location>
        <position position="92"/>
    </location>
    <ligand>
        <name>UDP-N-acetyl-alpha-D-glucosamine</name>
        <dbReference type="ChEBI" id="CHEBI:57705"/>
    </ligand>
</feature>
<feature type="binding site" evidence="1">
    <location>
        <begin position="121"/>
        <end position="125"/>
    </location>
    <ligand>
        <name>UDP-N-acetyl-alpha-D-glucosamine</name>
        <dbReference type="ChEBI" id="CHEBI:57705"/>
    </ligand>
</feature>
<feature type="binding site" evidence="1">
    <location>
        <begin position="161"/>
        <end position="164"/>
    </location>
    <ligand>
        <name>UDP-N-acetyl-alpha-D-glucosamine</name>
        <dbReference type="ChEBI" id="CHEBI:57705"/>
    </ligand>
</feature>
<feature type="binding site" evidence="1">
    <location>
        <position position="306"/>
    </location>
    <ligand>
        <name>UDP-N-acetyl-alpha-D-glucosamine</name>
        <dbReference type="ChEBI" id="CHEBI:57705"/>
    </ligand>
</feature>
<feature type="binding site" evidence="1">
    <location>
        <position position="328"/>
    </location>
    <ligand>
        <name>UDP-N-acetyl-alpha-D-glucosamine</name>
        <dbReference type="ChEBI" id="CHEBI:57705"/>
    </ligand>
</feature>
<feature type="modified residue" description="2-(S-cysteinyl)pyruvic acid O-phosphothioketal" evidence="1">
    <location>
        <position position="116"/>
    </location>
</feature>